<accession>Q6G5G0</accession>
<protein>
    <recommendedName>
        <fullName evidence="1">ATP-dependent protease ATPase subunit HslU</fullName>
    </recommendedName>
    <alternativeName>
        <fullName evidence="1">Unfoldase HslU</fullName>
    </alternativeName>
</protein>
<comment type="function">
    <text evidence="1">ATPase subunit of a proteasome-like degradation complex; this subunit has chaperone activity. The binding of ATP and its subsequent hydrolysis by HslU are essential for unfolding of protein substrates subsequently hydrolyzed by HslV. HslU recognizes the N-terminal part of its protein substrates and unfolds these before they are guided to HslV for hydrolysis.</text>
</comment>
<comment type="subunit">
    <text evidence="1">A double ring-shaped homohexamer of HslV is capped on each side by a ring-shaped HslU homohexamer. The assembly of the HslU/HslV complex is dependent on binding of ATP.</text>
</comment>
<comment type="subcellular location">
    <subcellularLocation>
        <location evidence="1">Cytoplasm</location>
    </subcellularLocation>
</comment>
<comment type="similarity">
    <text evidence="1">Belongs to the ClpX chaperone family. HslU subfamily.</text>
</comment>
<keyword id="KW-0067">ATP-binding</keyword>
<keyword id="KW-0143">Chaperone</keyword>
<keyword id="KW-0963">Cytoplasm</keyword>
<keyword id="KW-0547">Nucleotide-binding</keyword>
<evidence type="ECO:0000255" key="1">
    <source>
        <dbReference type="HAMAP-Rule" id="MF_00249"/>
    </source>
</evidence>
<organism>
    <name type="scientific">Bartonella henselae (strain ATCC 49882 / DSM 28221 / CCUG 30454 / Houston 1)</name>
    <name type="common">Rochalimaea henselae</name>
    <dbReference type="NCBI Taxonomy" id="283166"/>
    <lineage>
        <taxon>Bacteria</taxon>
        <taxon>Pseudomonadati</taxon>
        <taxon>Pseudomonadota</taxon>
        <taxon>Alphaproteobacteria</taxon>
        <taxon>Hyphomicrobiales</taxon>
        <taxon>Bartonellaceae</taxon>
        <taxon>Bartonella</taxon>
    </lineage>
</organism>
<dbReference type="EMBL" id="BX897699">
    <property type="protein sequence ID" value="CAF27020.1"/>
    <property type="molecule type" value="Genomic_DNA"/>
</dbReference>
<dbReference type="RefSeq" id="WP_011180159.1">
    <property type="nucleotide sequence ID" value="NZ_LRIJ02000001.1"/>
</dbReference>
<dbReference type="SMR" id="Q6G5G0"/>
<dbReference type="PaxDb" id="283166-BH02080"/>
<dbReference type="EnsemblBacteria" id="CAF27020">
    <property type="protein sequence ID" value="CAF27020"/>
    <property type="gene ID" value="BH02080"/>
</dbReference>
<dbReference type="GeneID" id="92984875"/>
<dbReference type="KEGG" id="bhe:BH02080"/>
<dbReference type="eggNOG" id="COG1220">
    <property type="taxonomic scope" value="Bacteria"/>
</dbReference>
<dbReference type="OrthoDB" id="9804062at2"/>
<dbReference type="Proteomes" id="UP000000421">
    <property type="component" value="Chromosome"/>
</dbReference>
<dbReference type="GO" id="GO:0009376">
    <property type="term" value="C:HslUV protease complex"/>
    <property type="evidence" value="ECO:0007669"/>
    <property type="project" value="UniProtKB-UniRule"/>
</dbReference>
<dbReference type="GO" id="GO:0005524">
    <property type="term" value="F:ATP binding"/>
    <property type="evidence" value="ECO:0007669"/>
    <property type="project" value="UniProtKB-UniRule"/>
</dbReference>
<dbReference type="GO" id="GO:0016887">
    <property type="term" value="F:ATP hydrolysis activity"/>
    <property type="evidence" value="ECO:0007669"/>
    <property type="project" value="InterPro"/>
</dbReference>
<dbReference type="GO" id="GO:0008233">
    <property type="term" value="F:peptidase activity"/>
    <property type="evidence" value="ECO:0007669"/>
    <property type="project" value="InterPro"/>
</dbReference>
<dbReference type="GO" id="GO:0036402">
    <property type="term" value="F:proteasome-activating activity"/>
    <property type="evidence" value="ECO:0007669"/>
    <property type="project" value="UniProtKB-UniRule"/>
</dbReference>
<dbReference type="GO" id="GO:0043335">
    <property type="term" value="P:protein unfolding"/>
    <property type="evidence" value="ECO:0007669"/>
    <property type="project" value="UniProtKB-UniRule"/>
</dbReference>
<dbReference type="GO" id="GO:0051603">
    <property type="term" value="P:proteolysis involved in protein catabolic process"/>
    <property type="evidence" value="ECO:0007669"/>
    <property type="project" value="TreeGrafter"/>
</dbReference>
<dbReference type="CDD" id="cd19498">
    <property type="entry name" value="RecA-like_HslU"/>
    <property type="match status" value="1"/>
</dbReference>
<dbReference type="FunFam" id="3.40.50.300:FF:000213">
    <property type="entry name" value="ATP-dependent protease ATPase subunit HslU"/>
    <property type="match status" value="1"/>
</dbReference>
<dbReference type="FunFam" id="3.40.50.300:FF:000220">
    <property type="entry name" value="ATP-dependent protease ATPase subunit HslU"/>
    <property type="match status" value="1"/>
</dbReference>
<dbReference type="Gene3D" id="1.10.8.60">
    <property type="match status" value="1"/>
</dbReference>
<dbReference type="Gene3D" id="1.10.8.10">
    <property type="entry name" value="DNA helicase RuvA subunit, C-terminal domain"/>
    <property type="match status" value="1"/>
</dbReference>
<dbReference type="Gene3D" id="3.40.50.300">
    <property type="entry name" value="P-loop containing nucleotide triphosphate hydrolases"/>
    <property type="match status" value="2"/>
</dbReference>
<dbReference type="HAMAP" id="MF_00249">
    <property type="entry name" value="HslU"/>
    <property type="match status" value="1"/>
</dbReference>
<dbReference type="InterPro" id="IPR003593">
    <property type="entry name" value="AAA+_ATPase"/>
</dbReference>
<dbReference type="InterPro" id="IPR050052">
    <property type="entry name" value="ATP-dep_Clp_protease_ClpX"/>
</dbReference>
<dbReference type="InterPro" id="IPR003959">
    <property type="entry name" value="ATPase_AAA_core"/>
</dbReference>
<dbReference type="InterPro" id="IPR019489">
    <property type="entry name" value="Clp_ATPase_C"/>
</dbReference>
<dbReference type="InterPro" id="IPR004491">
    <property type="entry name" value="HslU"/>
</dbReference>
<dbReference type="InterPro" id="IPR027417">
    <property type="entry name" value="P-loop_NTPase"/>
</dbReference>
<dbReference type="NCBIfam" id="TIGR00390">
    <property type="entry name" value="hslU"/>
    <property type="match status" value="1"/>
</dbReference>
<dbReference type="NCBIfam" id="NF003544">
    <property type="entry name" value="PRK05201.1"/>
    <property type="match status" value="1"/>
</dbReference>
<dbReference type="PANTHER" id="PTHR48102">
    <property type="entry name" value="ATP-DEPENDENT CLP PROTEASE ATP-BINDING SUBUNIT CLPX-LIKE, MITOCHONDRIAL-RELATED"/>
    <property type="match status" value="1"/>
</dbReference>
<dbReference type="PANTHER" id="PTHR48102:SF3">
    <property type="entry name" value="ATP-DEPENDENT PROTEASE ATPASE SUBUNIT HSLU"/>
    <property type="match status" value="1"/>
</dbReference>
<dbReference type="Pfam" id="PF00004">
    <property type="entry name" value="AAA"/>
    <property type="match status" value="1"/>
</dbReference>
<dbReference type="Pfam" id="PF07724">
    <property type="entry name" value="AAA_2"/>
    <property type="match status" value="1"/>
</dbReference>
<dbReference type="Pfam" id="PF10431">
    <property type="entry name" value="ClpB_D2-small"/>
    <property type="match status" value="1"/>
</dbReference>
<dbReference type="SMART" id="SM00382">
    <property type="entry name" value="AAA"/>
    <property type="match status" value="1"/>
</dbReference>
<dbReference type="SMART" id="SM01086">
    <property type="entry name" value="ClpB_D2-small"/>
    <property type="match status" value="1"/>
</dbReference>
<dbReference type="SUPFAM" id="SSF52540">
    <property type="entry name" value="P-loop containing nucleoside triphosphate hydrolases"/>
    <property type="match status" value="1"/>
</dbReference>
<reference key="1">
    <citation type="journal article" date="2004" name="Proc. Natl. Acad. Sci. U.S.A.">
        <title>The louse-borne human pathogen Bartonella quintana is a genomic derivative of the zoonotic agent Bartonella henselae.</title>
        <authorList>
            <person name="Alsmark U.C.M."/>
            <person name="Frank A.C."/>
            <person name="Karlberg E.O."/>
            <person name="Legault B.-A."/>
            <person name="Ardell D.H."/>
            <person name="Canbaeck B."/>
            <person name="Eriksson A.-S."/>
            <person name="Naeslund A.K."/>
            <person name="Handley S.A."/>
            <person name="Huvet M."/>
            <person name="La Scola B."/>
            <person name="Holmberg M."/>
            <person name="Andersson S.G.E."/>
        </authorList>
    </citation>
    <scope>NUCLEOTIDE SEQUENCE [LARGE SCALE GENOMIC DNA]</scope>
    <source>
        <strain>ATCC 49882 / DSM 28221 / CCUG 30454 / Houston 1</strain>
    </source>
</reference>
<name>HSLU_BARHE</name>
<feature type="chain" id="PRO_0000160477" description="ATP-dependent protease ATPase subunit HslU">
    <location>
        <begin position="1"/>
        <end position="436"/>
    </location>
</feature>
<feature type="binding site" evidence="1">
    <location>
        <position position="19"/>
    </location>
    <ligand>
        <name>ATP</name>
        <dbReference type="ChEBI" id="CHEBI:30616"/>
    </ligand>
</feature>
<feature type="binding site" evidence="1">
    <location>
        <begin position="61"/>
        <end position="65"/>
    </location>
    <ligand>
        <name>ATP</name>
        <dbReference type="ChEBI" id="CHEBI:30616"/>
    </ligand>
</feature>
<feature type="binding site" evidence="1">
    <location>
        <position position="249"/>
    </location>
    <ligand>
        <name>ATP</name>
        <dbReference type="ChEBI" id="CHEBI:30616"/>
    </ligand>
</feature>
<feature type="binding site" evidence="1">
    <location>
        <position position="314"/>
    </location>
    <ligand>
        <name>ATP</name>
        <dbReference type="ChEBI" id="CHEBI:30616"/>
    </ligand>
</feature>
<feature type="binding site" evidence="1">
    <location>
        <position position="386"/>
    </location>
    <ligand>
        <name>ATP</name>
        <dbReference type="ChEBI" id="CHEBI:30616"/>
    </ligand>
</feature>
<gene>
    <name evidence="1" type="primary">hslU</name>
    <name type="ordered locus">BH02080</name>
</gene>
<proteinExistence type="inferred from homology"/>
<sequence>MCVVFSPRETVSELDRFIIGQSDAKRSVAIALRNRWRRQQLDGPMRDEVMPKNILMIGPTGVGKTGIARRLAKLAGAPFVKVEATKFTEVGYVGRDVEQIIRDLVEIAISLVREKKRDEVKVKAHINAEERVLDALVGKTASPATRESFRKKLRDGELDEKEIEIEVSDNNSNSTSTFDIPGMPGAQMGIMNLSEIFGKMGNRTKVRKTTVKDAFKPLIDDESEKLLDQDQIIQEALRVAENDGIVFIDEIDKIATRDGGASAAVSREGVQRDLLPLVEGTTIATKYGQIKTDHILFIASGAFHVSKPSDLLPELQGRLPIRVELNPLTREDLRRILTEPEASLIKQYIALMATEEVHLEITDDAIDALADIAVDLNARIENIGARRLQTVMERVLDEISFTAPDKAGTSFKVDAAYVKKSIGDLAADVDLSRFIL</sequence>